<organism>
    <name type="scientific">Leptospira biflexa</name>
    <dbReference type="NCBI Taxonomy" id="172"/>
    <lineage>
        <taxon>Bacteria</taxon>
        <taxon>Pseudomonadati</taxon>
        <taxon>Spirochaetota</taxon>
        <taxon>Spirochaetia</taxon>
        <taxon>Leptospirales</taxon>
        <taxon>Leptospiraceae</taxon>
        <taxon>Leptospira</taxon>
    </lineage>
</organism>
<proteinExistence type="inferred from homology"/>
<accession>Q8GCV0</accession>
<name>HEMH_LEPBI</name>
<reference key="1">
    <citation type="submission" date="2002-10" db="EMBL/GenBank/DDBJ databases">
        <title>hemH locus of L. biflexa.</title>
        <authorList>
            <person name="Picardeau M."/>
            <person name="Guegan R."/>
        </authorList>
    </citation>
    <scope>NUCLEOTIDE SEQUENCE [GENOMIC DNA]</scope>
    <source>
        <strain>Patoc I / Serovar Patoc</strain>
    </source>
</reference>
<comment type="function">
    <text evidence="1">Catalyzes the ferrous insertion into protoporphyrin IX.</text>
</comment>
<comment type="catalytic activity">
    <reaction evidence="1">
        <text>heme b + 2 H(+) = protoporphyrin IX + Fe(2+)</text>
        <dbReference type="Rhea" id="RHEA:22584"/>
        <dbReference type="ChEBI" id="CHEBI:15378"/>
        <dbReference type="ChEBI" id="CHEBI:29033"/>
        <dbReference type="ChEBI" id="CHEBI:57306"/>
        <dbReference type="ChEBI" id="CHEBI:60344"/>
        <dbReference type="EC" id="4.98.1.1"/>
    </reaction>
</comment>
<comment type="pathway">
    <text evidence="1">Porphyrin-containing compound metabolism; protoheme biosynthesis; protoheme from protoporphyrin-IX: step 1/1.</text>
</comment>
<comment type="subcellular location">
    <subcellularLocation>
        <location evidence="1">Cytoplasm</location>
    </subcellularLocation>
</comment>
<comment type="similarity">
    <text evidence="1">Belongs to the ferrochelatase family.</text>
</comment>
<gene>
    <name evidence="1" type="primary">hemH</name>
</gene>
<evidence type="ECO:0000255" key="1">
    <source>
        <dbReference type="HAMAP-Rule" id="MF_00323"/>
    </source>
</evidence>
<dbReference type="EC" id="4.98.1.1" evidence="1"/>
<dbReference type="EMBL" id="AY164270">
    <property type="protein sequence ID" value="AAN87868.1"/>
    <property type="molecule type" value="Genomic_DNA"/>
</dbReference>
<dbReference type="SMR" id="Q8GCV0"/>
<dbReference type="UniPathway" id="UPA00252">
    <property type="reaction ID" value="UER00325"/>
</dbReference>
<dbReference type="GO" id="GO:0005737">
    <property type="term" value="C:cytoplasm"/>
    <property type="evidence" value="ECO:0007669"/>
    <property type="project" value="UniProtKB-SubCell"/>
</dbReference>
<dbReference type="GO" id="GO:0004325">
    <property type="term" value="F:ferrochelatase activity"/>
    <property type="evidence" value="ECO:0007669"/>
    <property type="project" value="UniProtKB-UniRule"/>
</dbReference>
<dbReference type="GO" id="GO:0046872">
    <property type="term" value="F:metal ion binding"/>
    <property type="evidence" value="ECO:0007669"/>
    <property type="project" value="UniProtKB-KW"/>
</dbReference>
<dbReference type="GO" id="GO:0006783">
    <property type="term" value="P:heme biosynthetic process"/>
    <property type="evidence" value="ECO:0007669"/>
    <property type="project" value="UniProtKB-UniRule"/>
</dbReference>
<dbReference type="CDD" id="cd00419">
    <property type="entry name" value="Ferrochelatase_C"/>
    <property type="match status" value="1"/>
</dbReference>
<dbReference type="CDD" id="cd03411">
    <property type="entry name" value="Ferrochelatase_N"/>
    <property type="match status" value="1"/>
</dbReference>
<dbReference type="Gene3D" id="3.40.50.1400">
    <property type="match status" value="2"/>
</dbReference>
<dbReference type="HAMAP" id="MF_00323">
    <property type="entry name" value="Ferrochelatase"/>
    <property type="match status" value="1"/>
</dbReference>
<dbReference type="InterPro" id="IPR001015">
    <property type="entry name" value="Ferrochelatase"/>
</dbReference>
<dbReference type="InterPro" id="IPR019772">
    <property type="entry name" value="Ferrochelatase_AS"/>
</dbReference>
<dbReference type="InterPro" id="IPR033644">
    <property type="entry name" value="Ferrochelatase_C"/>
</dbReference>
<dbReference type="InterPro" id="IPR033659">
    <property type="entry name" value="Ferrochelatase_N"/>
</dbReference>
<dbReference type="NCBIfam" id="TIGR00109">
    <property type="entry name" value="hemH"/>
    <property type="match status" value="1"/>
</dbReference>
<dbReference type="PANTHER" id="PTHR11108">
    <property type="entry name" value="FERROCHELATASE"/>
    <property type="match status" value="1"/>
</dbReference>
<dbReference type="PANTHER" id="PTHR11108:SF1">
    <property type="entry name" value="FERROCHELATASE, MITOCHONDRIAL"/>
    <property type="match status" value="1"/>
</dbReference>
<dbReference type="Pfam" id="PF00762">
    <property type="entry name" value="Ferrochelatase"/>
    <property type="match status" value="1"/>
</dbReference>
<dbReference type="SUPFAM" id="SSF53800">
    <property type="entry name" value="Chelatase"/>
    <property type="match status" value="1"/>
</dbReference>
<dbReference type="PROSITE" id="PS00534">
    <property type="entry name" value="FERROCHELATASE"/>
    <property type="match status" value="1"/>
</dbReference>
<protein>
    <recommendedName>
        <fullName evidence="1">Ferrochelatase</fullName>
        <ecNumber evidence="1">4.98.1.1</ecNumber>
    </recommendedName>
    <alternativeName>
        <fullName evidence="1">Heme synthase</fullName>
    </alternativeName>
    <alternativeName>
        <fullName evidence="1">Protoheme ferro-lyase</fullName>
    </alternativeName>
</protein>
<feature type="chain" id="PRO_0000175158" description="Ferrochelatase">
    <location>
        <begin position="1"/>
        <end position="362"/>
    </location>
</feature>
<feature type="binding site" evidence="1">
    <location>
        <position position="212"/>
    </location>
    <ligand>
        <name>Fe cation</name>
        <dbReference type="ChEBI" id="CHEBI:24875"/>
    </ligand>
</feature>
<feature type="binding site" evidence="1">
    <location>
        <position position="294"/>
    </location>
    <ligand>
        <name>Fe cation</name>
        <dbReference type="ChEBI" id="CHEBI:24875"/>
    </ligand>
</feature>
<sequence length="362" mass="41044">MITNKVKTLILVNLGGPRTPSEIEVFLRDLFSDPFVFDLPLPEFLRLRLARFIAKKRAPKVQKSYESMGFGGGSPLVEETAKQAHALELALNERSSEQWNVKVAMACGYPNMRDIEFGKPNQDTVYLPLYPQFSRSTVLSTLAILETKFGECPVGSGGYVPHFGLDPNFHSISAKFIYEFFTNQLPKDQYLHYPEEKPNCDWRNLDLVFSAHGVPMRLIHKGDRYMEEVELSVKGIADELSKFGFNGGVHISYQSKVGPAKWTEPSTIQMISSLAKQGKHIAVYPISFVSDHIETLEEIGEQFKDLTWEMGGKSFVRIPALGIYPSFIQFLAEKVMHSDRKIQHCICREKGGESLQHCRFKD</sequence>
<keyword id="KW-0963">Cytoplasm</keyword>
<keyword id="KW-0350">Heme biosynthesis</keyword>
<keyword id="KW-0408">Iron</keyword>
<keyword id="KW-0456">Lyase</keyword>
<keyword id="KW-0479">Metal-binding</keyword>
<keyword id="KW-0627">Porphyrin biosynthesis</keyword>